<reference key="1">
    <citation type="journal article" date="2020" name="Biochem. J.">
        <title>Identification of an l-serine/l-threonine dehydratase with glutamate racemase activity in mammals.</title>
        <authorList>
            <person name="Katane M."/>
            <person name="Nakasako K."/>
            <person name="Yako K."/>
            <person name="Saitoh Y."/>
            <person name="Sekine M."/>
            <person name="Homma H."/>
        </authorList>
    </citation>
    <scope>NUCLEOTIDE SEQUENCE [MRNA]</scope>
    <scope>FUNCTION</scope>
    <scope>CATALYTIC ACTIVITY</scope>
    <scope>SUBUNIT</scope>
    <scope>COFACTOR</scope>
    <scope>ACTIVITY REGULATION</scope>
    <scope>BIOPHYSICOCHEMICAL PROPERTIES</scope>
</reference>
<reference key="2">
    <citation type="journal article" date="2004" name="Nature">
        <title>Genome sequence of the Brown Norway rat yields insights into mammalian evolution.</title>
        <authorList>
            <person name="Gibbs R.A."/>
            <person name="Weinstock G.M."/>
            <person name="Metzker M.L."/>
            <person name="Muzny D.M."/>
            <person name="Sodergren E.J."/>
            <person name="Scherer S."/>
            <person name="Scott G."/>
            <person name="Steffen D."/>
            <person name="Worley K.C."/>
            <person name="Burch P.E."/>
            <person name="Okwuonu G."/>
            <person name="Hines S."/>
            <person name="Lewis L."/>
            <person name="Deramo C."/>
            <person name="Delgado O."/>
            <person name="Dugan-Rocha S."/>
            <person name="Miner G."/>
            <person name="Morgan M."/>
            <person name="Hawes A."/>
            <person name="Gill R."/>
            <person name="Holt R.A."/>
            <person name="Adams M.D."/>
            <person name="Amanatides P.G."/>
            <person name="Baden-Tillson H."/>
            <person name="Barnstead M."/>
            <person name="Chin S."/>
            <person name="Evans C.A."/>
            <person name="Ferriera S."/>
            <person name="Fosler C."/>
            <person name="Glodek A."/>
            <person name="Gu Z."/>
            <person name="Jennings D."/>
            <person name="Kraft C.L."/>
            <person name="Nguyen T."/>
            <person name="Pfannkoch C.M."/>
            <person name="Sitter C."/>
            <person name="Sutton G.G."/>
            <person name="Venter J.C."/>
            <person name="Woodage T."/>
            <person name="Smith D."/>
            <person name="Lee H.-M."/>
            <person name="Gustafson E."/>
            <person name="Cahill P."/>
            <person name="Kana A."/>
            <person name="Doucette-Stamm L."/>
            <person name="Weinstock K."/>
            <person name="Fechtel K."/>
            <person name="Weiss R.B."/>
            <person name="Dunn D.M."/>
            <person name="Green E.D."/>
            <person name="Blakesley R.W."/>
            <person name="Bouffard G.G."/>
            <person name="De Jong P.J."/>
            <person name="Osoegawa K."/>
            <person name="Zhu B."/>
            <person name="Marra M."/>
            <person name="Schein J."/>
            <person name="Bosdet I."/>
            <person name="Fjell C."/>
            <person name="Jones S."/>
            <person name="Krzywinski M."/>
            <person name="Mathewson C."/>
            <person name="Siddiqui A."/>
            <person name="Wye N."/>
            <person name="McPherson J."/>
            <person name="Zhao S."/>
            <person name="Fraser C.M."/>
            <person name="Shetty J."/>
            <person name="Shatsman S."/>
            <person name="Geer K."/>
            <person name="Chen Y."/>
            <person name="Abramzon S."/>
            <person name="Nierman W.C."/>
            <person name="Havlak P.H."/>
            <person name="Chen R."/>
            <person name="Durbin K.J."/>
            <person name="Egan A."/>
            <person name="Ren Y."/>
            <person name="Song X.-Z."/>
            <person name="Li B."/>
            <person name="Liu Y."/>
            <person name="Qin X."/>
            <person name="Cawley S."/>
            <person name="Cooney A.J."/>
            <person name="D'Souza L.M."/>
            <person name="Martin K."/>
            <person name="Wu J.Q."/>
            <person name="Gonzalez-Garay M.L."/>
            <person name="Jackson A.R."/>
            <person name="Kalafus K.J."/>
            <person name="McLeod M.P."/>
            <person name="Milosavljevic A."/>
            <person name="Virk D."/>
            <person name="Volkov A."/>
            <person name="Wheeler D.A."/>
            <person name="Zhang Z."/>
            <person name="Bailey J.A."/>
            <person name="Eichler E.E."/>
            <person name="Tuzun E."/>
            <person name="Birney E."/>
            <person name="Mongin E."/>
            <person name="Ureta-Vidal A."/>
            <person name="Woodwark C."/>
            <person name="Zdobnov E."/>
            <person name="Bork P."/>
            <person name="Suyama M."/>
            <person name="Torrents D."/>
            <person name="Alexandersson M."/>
            <person name="Trask B.J."/>
            <person name="Young J.M."/>
            <person name="Huang H."/>
            <person name="Wang H."/>
            <person name="Xing H."/>
            <person name="Daniels S."/>
            <person name="Gietzen D."/>
            <person name="Schmidt J."/>
            <person name="Stevens K."/>
            <person name="Vitt U."/>
            <person name="Wingrove J."/>
            <person name="Camara F."/>
            <person name="Mar Alba M."/>
            <person name="Abril J.F."/>
            <person name="Guigo R."/>
            <person name="Smit A."/>
            <person name="Dubchak I."/>
            <person name="Rubin E.M."/>
            <person name="Couronne O."/>
            <person name="Poliakov A."/>
            <person name="Huebner N."/>
            <person name="Ganten D."/>
            <person name="Goesele C."/>
            <person name="Hummel O."/>
            <person name="Kreitler T."/>
            <person name="Lee Y.-A."/>
            <person name="Monti J."/>
            <person name="Schulz H."/>
            <person name="Zimdahl H."/>
            <person name="Himmelbauer H."/>
            <person name="Lehrach H."/>
            <person name="Jacob H.J."/>
            <person name="Bromberg S."/>
            <person name="Gullings-Handley J."/>
            <person name="Jensen-Seaman M.I."/>
            <person name="Kwitek A.E."/>
            <person name="Lazar J."/>
            <person name="Pasko D."/>
            <person name="Tonellato P.J."/>
            <person name="Twigger S."/>
            <person name="Ponting C.P."/>
            <person name="Duarte J.M."/>
            <person name="Rice S."/>
            <person name="Goodstadt L."/>
            <person name="Beatson S.A."/>
            <person name="Emes R.D."/>
            <person name="Winter E.E."/>
            <person name="Webber C."/>
            <person name="Brandt P."/>
            <person name="Nyakatura G."/>
            <person name="Adetobi M."/>
            <person name="Chiaromonte F."/>
            <person name="Elnitski L."/>
            <person name="Eswara P."/>
            <person name="Hardison R.C."/>
            <person name="Hou M."/>
            <person name="Kolbe D."/>
            <person name="Makova K."/>
            <person name="Miller W."/>
            <person name="Nekrutenko A."/>
            <person name="Riemer C."/>
            <person name="Schwartz S."/>
            <person name="Taylor J."/>
            <person name="Yang S."/>
            <person name="Zhang Y."/>
            <person name="Lindpaintner K."/>
            <person name="Andrews T.D."/>
            <person name="Caccamo M."/>
            <person name="Clamp M."/>
            <person name="Clarke L."/>
            <person name="Curwen V."/>
            <person name="Durbin R.M."/>
            <person name="Eyras E."/>
            <person name="Searle S.M."/>
            <person name="Cooper G.M."/>
            <person name="Batzoglou S."/>
            <person name="Brudno M."/>
            <person name="Sidow A."/>
            <person name="Stone E.A."/>
            <person name="Payseur B.A."/>
            <person name="Bourque G."/>
            <person name="Lopez-Otin C."/>
            <person name="Puente X.S."/>
            <person name="Chakrabarti K."/>
            <person name="Chatterji S."/>
            <person name="Dewey C."/>
            <person name="Pachter L."/>
            <person name="Bray N."/>
            <person name="Yap V.B."/>
            <person name="Caspi A."/>
            <person name="Tesler G."/>
            <person name="Pevzner P.A."/>
            <person name="Haussler D."/>
            <person name="Roskin K.M."/>
            <person name="Baertsch R."/>
            <person name="Clawson H."/>
            <person name="Furey T.S."/>
            <person name="Hinrichs A.S."/>
            <person name="Karolchik D."/>
            <person name="Kent W.J."/>
            <person name="Rosenbloom K.R."/>
            <person name="Trumbower H."/>
            <person name="Weirauch M."/>
            <person name="Cooper D.N."/>
            <person name="Stenson P.D."/>
            <person name="Ma B."/>
            <person name="Brent M."/>
            <person name="Arumugam M."/>
            <person name="Shteynberg D."/>
            <person name="Copley R.R."/>
            <person name="Taylor M.S."/>
            <person name="Riethman H."/>
            <person name="Mudunuri U."/>
            <person name="Peterson J."/>
            <person name="Guyer M."/>
            <person name="Felsenfeld A."/>
            <person name="Old S."/>
            <person name="Mockrin S."/>
            <person name="Collins F.S."/>
        </authorList>
    </citation>
    <scope>NUCLEOTIDE SEQUENCE [LARGE SCALE GENOMIC DNA]</scope>
    <source>
        <strain>Brown Norway</strain>
    </source>
</reference>
<reference key="3">
    <citation type="submission" date="2005-07" db="EMBL/GenBank/DDBJ databases">
        <authorList>
            <person name="Mural R.J."/>
            <person name="Li P.W."/>
            <person name="Adams M.D."/>
            <person name="Amanatides P.G."/>
            <person name="Baden-Tillson H."/>
            <person name="Barnstead M."/>
            <person name="Chin S.H."/>
            <person name="Dew I."/>
            <person name="Evans C.A."/>
            <person name="Ferriera S."/>
            <person name="Flanigan M."/>
            <person name="Fosler C."/>
            <person name="Glodek A."/>
            <person name="Gu Z."/>
            <person name="Holt R.A."/>
            <person name="Jennings D."/>
            <person name="Kraft C.L."/>
            <person name="Lu F."/>
            <person name="Nguyen T."/>
            <person name="Nusskern D.R."/>
            <person name="Pfannkoch C.M."/>
            <person name="Sitter C."/>
            <person name="Sutton G.G."/>
            <person name="Venter J.C."/>
            <person name="Wang Z."/>
            <person name="Woodage T."/>
            <person name="Zheng X.H."/>
            <person name="Zhong F."/>
        </authorList>
    </citation>
    <scope>NUCLEOTIDE SEQUENCE [LARGE SCALE GENOMIC DNA]</scope>
    <source>
        <strain>Brown Norway</strain>
    </source>
</reference>
<organism>
    <name type="scientific">Rattus norvegicus</name>
    <name type="common">Rat</name>
    <dbReference type="NCBI Taxonomy" id="10116"/>
    <lineage>
        <taxon>Eukaryota</taxon>
        <taxon>Metazoa</taxon>
        <taxon>Chordata</taxon>
        <taxon>Craniata</taxon>
        <taxon>Vertebrata</taxon>
        <taxon>Euteleostomi</taxon>
        <taxon>Mammalia</taxon>
        <taxon>Eutheria</taxon>
        <taxon>Euarchontoglires</taxon>
        <taxon>Glires</taxon>
        <taxon>Rodentia</taxon>
        <taxon>Myomorpha</taxon>
        <taxon>Muroidea</taxon>
        <taxon>Muridae</taxon>
        <taxon>Murinae</taxon>
        <taxon>Rattus</taxon>
    </lineage>
</organism>
<protein>
    <recommendedName>
        <fullName>Serine dehydratase-like</fullName>
    </recommendedName>
    <alternativeName>
        <fullName>Glutamate racemase</fullName>
        <ecNumber evidence="2">5.1.1.3</ecNumber>
    </alternativeName>
    <alternativeName>
        <fullName>L-serine deaminase</fullName>
        <ecNumber evidence="2">4.3.1.17</ecNumber>
    </alternativeName>
    <alternativeName>
        <fullName>L-serine dehydratase/L-threonine deaminase</fullName>
    </alternativeName>
    <alternativeName>
        <fullName>L-threonine dehydratase</fullName>
        <shortName>TDH</shortName>
        <ecNumber evidence="2">4.3.1.19</ecNumber>
    </alternativeName>
</protein>
<keyword id="KW-0007">Acetylation</keyword>
<keyword id="KW-0413">Isomerase</keyword>
<keyword id="KW-0443">Lipid metabolism</keyword>
<keyword id="KW-0456">Lyase</keyword>
<keyword id="KW-0663">Pyridoxal phosphate</keyword>
<keyword id="KW-1185">Reference proteome</keyword>
<sequence>MEGASAECVRAEPFHRVTPLLESWALSQVAGMPVFLKYENVQIAGSFKIRGIGHFCQQMAKRGCRHLVCSSGGNAGIAAAYSAQKLGIPVTIVLPESTSKQVVRRLEGEGAEVQLTGKVWDEANVRAQELATRDGWVNVSPFDHPLIWEGNASLVRELKESLRTPPGAVVLAVGGGGLLAGVVAGLLEVGWQHVPIVAMETRGAHSFNAALLAGRLVTLPDITSVARSLGAKTVAARTLECAKECEVLSEVVEDREAVRAVQRFLDDERMLVEPACGAALAAVYSGILGRLQTEGRLSPALDSVVVIVCGGNNISSQQLQELKTQLNCS</sequence>
<accession>A0A6N3IN21</accession>
<accession>D3ZHV7</accession>
<gene>
    <name type="primary">Sdsl</name>
    <name evidence="3" type="synonym">Sdhl</name>
    <name evidence="3" type="synonym">Stdhgr</name>
</gene>
<comment type="function">
    <text evidence="2">Catalyzes the pyridoxal-phosphate-dependent dehydrative deamination of L-threonine and L-serine to ammonia and alpha-ketobutyrate and pyruvate, respectively (PubMed:33079132). Also exhibits racemase activity towards L-glutamate and D-glutamate (PubMed:33079132).</text>
</comment>
<comment type="catalytic activity">
    <reaction evidence="2">
        <text>L-serine = pyruvate + NH4(+)</text>
        <dbReference type="Rhea" id="RHEA:19169"/>
        <dbReference type="ChEBI" id="CHEBI:15361"/>
        <dbReference type="ChEBI" id="CHEBI:28938"/>
        <dbReference type="ChEBI" id="CHEBI:33384"/>
        <dbReference type="EC" id="4.3.1.17"/>
    </reaction>
</comment>
<comment type="catalytic activity">
    <reaction evidence="2">
        <text>L-threonine = 2-oxobutanoate + NH4(+)</text>
        <dbReference type="Rhea" id="RHEA:22108"/>
        <dbReference type="ChEBI" id="CHEBI:16763"/>
        <dbReference type="ChEBI" id="CHEBI:28938"/>
        <dbReference type="ChEBI" id="CHEBI:57926"/>
        <dbReference type="EC" id="4.3.1.19"/>
    </reaction>
</comment>
<comment type="catalytic activity">
    <reaction evidence="2">
        <text>L-glutamate = D-glutamate</text>
        <dbReference type="Rhea" id="RHEA:12813"/>
        <dbReference type="ChEBI" id="CHEBI:29985"/>
        <dbReference type="ChEBI" id="CHEBI:29986"/>
        <dbReference type="EC" id="5.1.1.3"/>
    </reaction>
    <physiologicalReaction direction="left-to-right" evidence="5">
        <dbReference type="Rhea" id="RHEA:12814"/>
    </physiologicalReaction>
    <physiologicalReaction direction="right-to-left" evidence="5">
        <dbReference type="Rhea" id="RHEA:12815"/>
    </physiologicalReaction>
</comment>
<comment type="cofactor">
    <cofactor evidence="2">
        <name>pyridoxal 5'-phosphate</name>
        <dbReference type="ChEBI" id="CHEBI:597326"/>
    </cofactor>
</comment>
<comment type="activity regulation">
    <text evidence="2">Serine dehydratase activity is inhibited by manganese chloride, ferrous chloride, cobalt chloride, cupric chloride, nickel chloride and zinc chloride. Glutamate racemase activity is inhibited by manganese chloride, ferrous chloride, cupric chloride and zinc chloride.</text>
</comment>
<comment type="biophysicochemical properties">
    <kinetics>
        <KM evidence="2">27.6 mM for L-serine</KM>
        <KM evidence="2">6.13 mM for L-threonine</KM>
        <KM evidence="2">111 mM for L-glutamate</KM>
        <KM evidence="2">147 mM for D-glutamate</KM>
        <text evidence="2">kcat is 844 min(-1) for L-serine and 152 min(-1) for L-threonine.</text>
    </kinetics>
    <phDependence>
        <text evidence="2">Optimum pH is 9.0 for serine dehydratase activity and 8.0 for glutamate racemase activity.</text>
    </phDependence>
    <temperatureDependence>
        <text evidence="2">Optimum temperature is 45 degrees Celsius at pH 8.3 for serine dehydratase and glutamate racemase activities.</text>
    </temperatureDependence>
</comment>
<comment type="subunit">
    <text evidence="1 2">Monomer (PubMed:33079132). Homodimer (By similarity).</text>
</comment>
<comment type="similarity">
    <text evidence="4">Belongs to the serine/threonine dehydratase family.</text>
</comment>
<dbReference type="EC" id="5.1.1.3" evidence="2"/>
<dbReference type="EC" id="4.3.1.17" evidence="2"/>
<dbReference type="EC" id="4.3.1.19" evidence="2"/>
<dbReference type="EMBL" id="LC552948">
    <property type="protein sequence ID" value="BCG52828.1"/>
    <property type="molecule type" value="mRNA"/>
</dbReference>
<dbReference type="EMBL" id="CH473973">
    <property type="protein sequence ID" value="EDM13784.1"/>
    <property type="molecule type" value="Genomic_DNA"/>
</dbReference>
<dbReference type="EMBL" id="AABR07036392">
    <property type="status" value="NOT_ANNOTATED_CDS"/>
    <property type="molecule type" value="Genomic_DNA"/>
</dbReference>
<dbReference type="RefSeq" id="NP_001101806.1">
    <property type="nucleotide sequence ID" value="NM_001108336.1"/>
</dbReference>
<dbReference type="SMR" id="A0A6N3IN21"/>
<dbReference type="PhosphoSitePlus" id="A0A6N3IN21"/>
<dbReference type="PaxDb" id="10116-ENSRNOP00000001882"/>
<dbReference type="GeneID" id="360816"/>
<dbReference type="KEGG" id="rno:360816"/>
<dbReference type="UCSC" id="RGD:1309192">
    <property type="organism name" value="rat"/>
</dbReference>
<dbReference type="AGR" id="RGD:1309192"/>
<dbReference type="CTD" id="113675"/>
<dbReference type="RGD" id="1309192">
    <property type="gene designation" value="Sdsl"/>
</dbReference>
<dbReference type="VEuPathDB" id="HostDB:ENSRNOG00000001391"/>
<dbReference type="eggNOG" id="KOG1250">
    <property type="taxonomic scope" value="Eukaryota"/>
</dbReference>
<dbReference type="HOGENOM" id="CLU_021152_3_0_1"/>
<dbReference type="InParanoid" id="D3ZHV7"/>
<dbReference type="OMA" id="CAANILH"/>
<dbReference type="OrthoDB" id="43025at9989"/>
<dbReference type="TreeFam" id="TF329014"/>
<dbReference type="Proteomes" id="UP000002494">
    <property type="component" value="Chromosome 12"/>
</dbReference>
<dbReference type="Proteomes" id="UP000234681">
    <property type="component" value="Chromosome 12"/>
</dbReference>
<dbReference type="Bgee" id="ENSRNOG00000001391">
    <property type="expression patterns" value="Expressed in liver and 17 other cell types or tissues"/>
</dbReference>
<dbReference type="GO" id="GO:0008881">
    <property type="term" value="F:glutamate racemase activity"/>
    <property type="evidence" value="ECO:0000314"/>
    <property type="project" value="UniProtKB"/>
</dbReference>
<dbReference type="GO" id="GO:0042802">
    <property type="term" value="F:identical protein binding"/>
    <property type="evidence" value="ECO:0000266"/>
    <property type="project" value="RGD"/>
</dbReference>
<dbReference type="GO" id="GO:0003941">
    <property type="term" value="F:L-serine ammonia-lyase activity"/>
    <property type="evidence" value="ECO:0000314"/>
    <property type="project" value="UniProtKB"/>
</dbReference>
<dbReference type="GO" id="GO:0030170">
    <property type="term" value="F:pyridoxal phosphate binding"/>
    <property type="evidence" value="ECO:0000314"/>
    <property type="project" value="UniProtKB"/>
</dbReference>
<dbReference type="GO" id="GO:0004794">
    <property type="term" value="F:threonine deaminase activity"/>
    <property type="evidence" value="ECO:0000314"/>
    <property type="project" value="UniProtKB"/>
</dbReference>
<dbReference type="GO" id="GO:0006629">
    <property type="term" value="P:lipid metabolic process"/>
    <property type="evidence" value="ECO:0007669"/>
    <property type="project" value="UniProtKB-KW"/>
</dbReference>
<dbReference type="CDD" id="cd06448">
    <property type="entry name" value="L-Ser-dehyd"/>
    <property type="match status" value="1"/>
</dbReference>
<dbReference type="FunFam" id="3.40.50.1100:FF:000031">
    <property type="entry name" value="L-serine dehydratase/L-threonine deaminase"/>
    <property type="match status" value="1"/>
</dbReference>
<dbReference type="Gene3D" id="3.40.50.1100">
    <property type="match status" value="2"/>
</dbReference>
<dbReference type="InterPro" id="IPR050147">
    <property type="entry name" value="Ser/Thr_Dehydratase"/>
</dbReference>
<dbReference type="InterPro" id="IPR001926">
    <property type="entry name" value="TrpB-like_PALP"/>
</dbReference>
<dbReference type="InterPro" id="IPR036052">
    <property type="entry name" value="TrpB-like_PALP_sf"/>
</dbReference>
<dbReference type="PANTHER" id="PTHR48078:SF16">
    <property type="entry name" value="SERINE DEHYDRATASE-LIKE"/>
    <property type="match status" value="1"/>
</dbReference>
<dbReference type="PANTHER" id="PTHR48078">
    <property type="entry name" value="THREONINE DEHYDRATASE, MITOCHONDRIAL-RELATED"/>
    <property type="match status" value="1"/>
</dbReference>
<dbReference type="Pfam" id="PF00291">
    <property type="entry name" value="PALP"/>
    <property type="match status" value="1"/>
</dbReference>
<dbReference type="SUPFAM" id="SSF53686">
    <property type="entry name" value="Tryptophan synthase beta subunit-like PLP-dependent enzymes"/>
    <property type="match status" value="1"/>
</dbReference>
<proteinExistence type="evidence at protein level"/>
<feature type="chain" id="PRO_0000460598" description="Serine dehydratase-like">
    <location>
        <begin position="1"/>
        <end position="329"/>
    </location>
</feature>
<feature type="modified residue" description="N-acetylmethionine" evidence="1">
    <location>
        <position position="1"/>
    </location>
</feature>
<feature type="modified residue" description="N6-(pyridoxal phosphate)lysine" evidence="1">
    <location>
        <position position="48"/>
    </location>
</feature>
<evidence type="ECO:0000250" key="1">
    <source>
        <dbReference type="UniProtKB" id="Q96GA7"/>
    </source>
</evidence>
<evidence type="ECO:0000269" key="2">
    <source>
    </source>
</evidence>
<evidence type="ECO:0000303" key="3">
    <source>
    </source>
</evidence>
<evidence type="ECO:0000305" key="4"/>
<evidence type="ECO:0000305" key="5">
    <source>
    </source>
</evidence>
<name>SDSL_RAT</name>